<proteinExistence type="inferred from homology"/>
<feature type="chain" id="PRO_0000276066" description="Photosystem I reaction center subunit IX">
    <location>
        <begin position="1"/>
        <end position="44"/>
    </location>
</feature>
<feature type="transmembrane region" description="Helical" evidence="1">
    <location>
        <begin position="7"/>
        <end position="27"/>
    </location>
</feature>
<geneLocation type="chloroplast"/>
<reference key="1">
    <citation type="journal article" date="2006" name="Mol. Genet. Genomics">
        <title>The chloroplast genome of Nicotiana sylvestris and Nicotiana tomentosiformis: complete sequencing confirms that the Nicotiana sylvestris progenitor is the maternal genome donor of Nicotiana tabacum.</title>
        <authorList>
            <person name="Yukawa M."/>
            <person name="Tsudzuki T."/>
            <person name="Sugiura M."/>
        </authorList>
    </citation>
    <scope>NUCLEOTIDE SEQUENCE [LARGE SCALE GENOMIC DNA]</scope>
</reference>
<keyword id="KW-0150">Chloroplast</keyword>
<keyword id="KW-0472">Membrane</keyword>
<keyword id="KW-0602">Photosynthesis</keyword>
<keyword id="KW-0603">Photosystem I</keyword>
<keyword id="KW-0934">Plastid</keyword>
<keyword id="KW-0793">Thylakoid</keyword>
<keyword id="KW-0812">Transmembrane</keyword>
<keyword id="KW-1133">Transmembrane helix</keyword>
<comment type="function">
    <text evidence="1">May help in the organization of the PsaE and PsaF subunits.</text>
</comment>
<comment type="subcellular location">
    <subcellularLocation>
        <location evidence="1">Plastid</location>
        <location evidence="1">Chloroplast thylakoid membrane</location>
        <topology evidence="1">Single-pass membrane protein</topology>
    </subcellularLocation>
</comment>
<comment type="similarity">
    <text evidence="1">Belongs to the PsaJ family.</text>
</comment>
<sequence>MRDLKTYLSVAPVLSTLWFGALAGLLIEINRFFPDALTFPFFSF</sequence>
<protein>
    <recommendedName>
        <fullName evidence="1">Photosystem I reaction center subunit IX</fullName>
    </recommendedName>
    <alternativeName>
        <fullName evidence="1">PSI-J</fullName>
    </alternativeName>
</protein>
<organism>
    <name type="scientific">Nicotiana tomentosiformis</name>
    <name type="common">Tobacco</name>
    <dbReference type="NCBI Taxonomy" id="4098"/>
    <lineage>
        <taxon>Eukaryota</taxon>
        <taxon>Viridiplantae</taxon>
        <taxon>Streptophyta</taxon>
        <taxon>Embryophyta</taxon>
        <taxon>Tracheophyta</taxon>
        <taxon>Spermatophyta</taxon>
        <taxon>Magnoliopsida</taxon>
        <taxon>eudicotyledons</taxon>
        <taxon>Gunneridae</taxon>
        <taxon>Pentapetalae</taxon>
        <taxon>asterids</taxon>
        <taxon>lamiids</taxon>
        <taxon>Solanales</taxon>
        <taxon>Solanaceae</taxon>
        <taxon>Nicotianoideae</taxon>
        <taxon>Nicotianeae</taxon>
        <taxon>Nicotiana</taxon>
    </lineage>
</organism>
<accession>Q33C12</accession>
<name>PSAJ_NICTO</name>
<dbReference type="EMBL" id="AB240139">
    <property type="protein sequence ID" value="BAE48023.1"/>
    <property type="molecule type" value="Genomic_DNA"/>
</dbReference>
<dbReference type="RefSeq" id="YP_398885.1">
    <property type="nucleotide sequence ID" value="NC_007602.1"/>
</dbReference>
<dbReference type="SMR" id="Q33C12"/>
<dbReference type="GeneID" id="3776366"/>
<dbReference type="KEGG" id="nto:3776366"/>
<dbReference type="OrthoDB" id="1844838at2759"/>
<dbReference type="GO" id="GO:0009535">
    <property type="term" value="C:chloroplast thylakoid membrane"/>
    <property type="evidence" value="ECO:0007669"/>
    <property type="project" value="UniProtKB-SubCell"/>
</dbReference>
<dbReference type="GO" id="GO:0009522">
    <property type="term" value="C:photosystem I"/>
    <property type="evidence" value="ECO:0007669"/>
    <property type="project" value="UniProtKB-KW"/>
</dbReference>
<dbReference type="GO" id="GO:0015979">
    <property type="term" value="P:photosynthesis"/>
    <property type="evidence" value="ECO:0007669"/>
    <property type="project" value="UniProtKB-UniRule"/>
</dbReference>
<dbReference type="FunFam" id="1.20.5.510:FF:000001">
    <property type="entry name" value="Photosystem I reaction center subunit IX"/>
    <property type="match status" value="1"/>
</dbReference>
<dbReference type="Gene3D" id="1.20.5.510">
    <property type="entry name" value="Single helix bin"/>
    <property type="match status" value="1"/>
</dbReference>
<dbReference type="HAMAP" id="MF_00522">
    <property type="entry name" value="PSI_PsaJ"/>
    <property type="match status" value="1"/>
</dbReference>
<dbReference type="InterPro" id="IPR002615">
    <property type="entry name" value="PSI_PsaJ"/>
</dbReference>
<dbReference type="InterPro" id="IPR036062">
    <property type="entry name" value="PSI_PsaJ_sf"/>
</dbReference>
<dbReference type="PANTHER" id="PTHR36082">
    <property type="match status" value="1"/>
</dbReference>
<dbReference type="PANTHER" id="PTHR36082:SF2">
    <property type="entry name" value="PHOTOSYSTEM I REACTION CENTER SUBUNIT IX"/>
    <property type="match status" value="1"/>
</dbReference>
<dbReference type="Pfam" id="PF01701">
    <property type="entry name" value="PSI_PsaJ"/>
    <property type="match status" value="1"/>
</dbReference>
<dbReference type="SUPFAM" id="SSF81544">
    <property type="entry name" value="Subunit IX of photosystem I reaction centre, PsaJ"/>
    <property type="match status" value="1"/>
</dbReference>
<gene>
    <name evidence="1" type="primary">psaJ</name>
</gene>
<evidence type="ECO:0000255" key="1">
    <source>
        <dbReference type="HAMAP-Rule" id="MF_00522"/>
    </source>
</evidence>